<gene>
    <name type="primary">Znf655</name>
    <name evidence="4" type="synonym">Kiaa4222</name>
    <name evidence="6" type="synonym">Zfp655</name>
</gene>
<feature type="chain" id="PRO_0000462182" description="Zinc finger protein 655">
    <location>
        <begin position="1"/>
        <end position="541"/>
    </location>
</feature>
<feature type="zinc finger region" description="C2H2-type 1" evidence="2">
    <location>
        <begin position="243"/>
        <end position="265"/>
    </location>
</feature>
<feature type="zinc finger region" description="C2H2-type 2" evidence="2">
    <location>
        <begin position="271"/>
        <end position="293"/>
    </location>
</feature>
<feature type="zinc finger region" description="C2H2-type 3" evidence="2">
    <location>
        <begin position="334"/>
        <end position="356"/>
    </location>
</feature>
<feature type="zinc finger region" description="C2H2-type 4" evidence="2">
    <location>
        <begin position="361"/>
        <end position="383"/>
    </location>
</feature>
<feature type="zinc finger region" description="C2H2-type 5" evidence="2">
    <location>
        <begin position="411"/>
        <end position="433"/>
    </location>
</feature>
<feature type="zinc finger region" description="C2H2-type 6" evidence="2">
    <location>
        <begin position="439"/>
        <end position="461"/>
    </location>
</feature>
<feature type="zinc finger region" description="C2H2-type 7; degenerate" evidence="2">
    <location>
        <begin position="495"/>
        <end position="517"/>
    </location>
</feature>
<feature type="region of interest" description="Disordered" evidence="3">
    <location>
        <begin position="1"/>
        <end position="22"/>
    </location>
</feature>
<feature type="splice variant" id="VSP_062538" description="In isoform 2.">
    <original>GFPISKPDGISEREQDLQVFDLESKNREVIRGDCSDGETREENKLLIPKRKISEEVHSYKVRVGKFKQDIAQVPETREVYKSEDRLERLQEILRKFLFLEREFRQITISKKTFSSEKNTEPEKSFSLDSTLDTDQR</original>
    <variation>APPVPQVPALPHEGSPGDQAAALLTARYQEFVTFEDVAVHLTREEWGCLDPVQRELYREVMLENYGNVVSLGILLRLPTTRIHCVNSCPALSHTQASAFSGETLAVLTAGITKRWPRDRLSIGSAHPSTETPFPRL</variation>
    <location>
        <begin position="46"/>
        <end position="181"/>
    </location>
</feature>
<feature type="splice variant" id="VSP_062539" description="In isoform 2.">
    <location>
        <begin position="182"/>
        <end position="541"/>
    </location>
</feature>
<feature type="sequence conflict" description="In Ref. 4; AAH60660." evidence="5" ref="4">
    <original>R</original>
    <variation>I</variation>
    <location>
        <position position="241"/>
    </location>
</feature>
<protein>
    <recommendedName>
        <fullName>Zinc finger protein 655</fullName>
    </recommendedName>
</protein>
<organism>
    <name type="scientific">Mus musculus</name>
    <name type="common">Mouse</name>
    <dbReference type="NCBI Taxonomy" id="10090"/>
    <lineage>
        <taxon>Eukaryota</taxon>
        <taxon>Metazoa</taxon>
        <taxon>Chordata</taxon>
        <taxon>Craniata</taxon>
        <taxon>Vertebrata</taxon>
        <taxon>Euteleostomi</taxon>
        <taxon>Mammalia</taxon>
        <taxon>Eutheria</taxon>
        <taxon>Euarchontoglires</taxon>
        <taxon>Glires</taxon>
        <taxon>Rodentia</taxon>
        <taxon>Myomorpha</taxon>
        <taxon>Muroidea</taxon>
        <taxon>Muridae</taxon>
        <taxon>Murinae</taxon>
        <taxon>Mus</taxon>
        <taxon>Mus</taxon>
    </lineage>
</organism>
<proteinExistence type="evidence at protein level"/>
<dbReference type="EMBL" id="AK012336">
    <property type="protein sequence ID" value="BAB28170.1"/>
    <property type="molecule type" value="mRNA"/>
</dbReference>
<dbReference type="EMBL" id="AK161949">
    <property type="protein sequence ID" value="BAE36650.1"/>
    <property type="molecule type" value="mRNA"/>
</dbReference>
<dbReference type="EMBL" id="AK220552">
    <property type="protein sequence ID" value="BAD90322.1"/>
    <property type="status" value="ALT_INIT"/>
    <property type="molecule type" value="mRNA"/>
</dbReference>
<dbReference type="EMBL" id="BC060660">
    <property type="protein sequence ID" value="AAH60660.1"/>
    <property type="molecule type" value="mRNA"/>
</dbReference>
<dbReference type="EMBL" id="BC061032">
    <property type="protein sequence ID" value="AAH61032.1"/>
    <property type="molecule type" value="mRNA"/>
</dbReference>
<dbReference type="EMBL" id="BC062945">
    <property type="protein sequence ID" value="AAH62945.1"/>
    <property type="molecule type" value="mRNA"/>
</dbReference>
<dbReference type="RefSeq" id="NP_001077427.1">
    <molecule id="Q9CZP3-2"/>
    <property type="nucleotide sequence ID" value="NM_001083958.1"/>
</dbReference>
<dbReference type="RefSeq" id="NP_082574.1">
    <molecule id="Q9CZP3-1"/>
    <property type="nucleotide sequence ID" value="NM_028298.3"/>
</dbReference>
<dbReference type="RefSeq" id="XP_017176603.1">
    <molecule id="Q9CZP3-1"/>
    <property type="nucleotide sequence ID" value="XM_017321114.1"/>
</dbReference>
<dbReference type="SMR" id="Q9CZP3"/>
<dbReference type="FunCoup" id="Q9CZP3">
    <property type="interactions" value="2125"/>
</dbReference>
<dbReference type="IntAct" id="Q9CZP3">
    <property type="interactions" value="1"/>
</dbReference>
<dbReference type="STRING" id="10090.ENSMUSP00000128969"/>
<dbReference type="GlyGen" id="Q9CZP3">
    <property type="glycosylation" value="1 site, 1 O-linked glycan (1 site)"/>
</dbReference>
<dbReference type="iPTMnet" id="Q5DTG8"/>
<dbReference type="PaxDb" id="10090-ENSMUSP00000128969"/>
<dbReference type="ProteomicsDB" id="304271"/>
<dbReference type="ProteomicsDB" id="306517"/>
<dbReference type="ProteomicsDB" id="332583"/>
<dbReference type="ProteomicsDB" id="337179"/>
<dbReference type="ProteomicsDB" id="342997"/>
<dbReference type="Antibodypedia" id="16203">
    <property type="antibodies" value="86 antibodies from 14 providers"/>
</dbReference>
<dbReference type="DNASU" id="72611"/>
<dbReference type="Ensembl" id="ENSMUST00000167316.8">
    <molecule id="Q9CZP3-1"/>
    <property type="protein sequence ID" value="ENSMUSP00000128969.2"/>
    <property type="gene ID" value="ENSMUSG00000007812.17"/>
</dbReference>
<dbReference type="Ensembl" id="ENSMUST00000200039.5">
    <molecule id="Q9CZP3-2"/>
    <property type="protein sequence ID" value="ENSMUSP00000143198.2"/>
    <property type="gene ID" value="ENSMUSG00000007812.17"/>
</dbReference>
<dbReference type="GeneID" id="72611"/>
<dbReference type="KEGG" id="mmu:72611"/>
<dbReference type="UCSC" id="uc009amr.1">
    <molecule id="Q9CZP3-1"/>
    <property type="organism name" value="mouse"/>
</dbReference>
<dbReference type="AGR" id="MGI:1919861"/>
<dbReference type="CTD" id="72611"/>
<dbReference type="MGI" id="MGI:1919861">
    <property type="gene designation" value="Zfp655"/>
</dbReference>
<dbReference type="VEuPathDB" id="HostDB:ENSMUSG00000007812"/>
<dbReference type="eggNOG" id="KOG1721">
    <property type="taxonomic scope" value="Eukaryota"/>
</dbReference>
<dbReference type="GeneTree" id="ENSGT00760000119441"/>
<dbReference type="HOGENOM" id="CLU_002678_0_0_1"/>
<dbReference type="OMA" id="HQRIHHQ"/>
<dbReference type="OrthoDB" id="670620at2759"/>
<dbReference type="TreeFam" id="TF344137"/>
<dbReference type="Reactome" id="R-MMU-212436">
    <property type="pathway name" value="Generic Transcription Pathway"/>
</dbReference>
<dbReference type="BioGRID-ORCS" id="72611">
    <property type="hits" value="2 hits in 75 CRISPR screens"/>
</dbReference>
<dbReference type="ChiTaRS" id="Zfp655">
    <property type="organism name" value="mouse"/>
</dbReference>
<dbReference type="Proteomes" id="UP000000589">
    <property type="component" value="Chromosome 5"/>
</dbReference>
<dbReference type="Bgee" id="ENSMUSG00000007812">
    <property type="expression patterns" value="Expressed in secondary oocyte and 233 other cell types or tissues"/>
</dbReference>
<dbReference type="ExpressionAtlas" id="Q9CZP3">
    <property type="expression patterns" value="baseline and differential"/>
</dbReference>
<dbReference type="GO" id="GO:0005737">
    <property type="term" value="C:cytoplasm"/>
    <property type="evidence" value="ECO:0000250"/>
    <property type="project" value="UniProtKB"/>
</dbReference>
<dbReference type="GO" id="GO:0005730">
    <property type="term" value="C:nucleolus"/>
    <property type="evidence" value="ECO:0000250"/>
    <property type="project" value="UniProtKB"/>
</dbReference>
<dbReference type="GO" id="GO:0005634">
    <property type="term" value="C:nucleus"/>
    <property type="evidence" value="ECO:0000250"/>
    <property type="project" value="UniProtKB"/>
</dbReference>
<dbReference type="GO" id="GO:0008270">
    <property type="term" value="F:zinc ion binding"/>
    <property type="evidence" value="ECO:0007669"/>
    <property type="project" value="UniProtKB-KW"/>
</dbReference>
<dbReference type="GO" id="GO:2000134">
    <property type="term" value="P:negative regulation of G1/S transition of mitotic cell cycle"/>
    <property type="evidence" value="ECO:0000250"/>
    <property type="project" value="UniProtKB"/>
</dbReference>
<dbReference type="GO" id="GO:0006355">
    <property type="term" value="P:regulation of DNA-templated transcription"/>
    <property type="evidence" value="ECO:0007669"/>
    <property type="project" value="InterPro"/>
</dbReference>
<dbReference type="FunFam" id="3.30.160.60:FF:000040">
    <property type="entry name" value="RB associated KRAB zinc finger"/>
    <property type="match status" value="1"/>
</dbReference>
<dbReference type="FunFam" id="3.30.160.60:FF:002129">
    <property type="entry name" value="Zinc finger protein 304"/>
    <property type="match status" value="1"/>
</dbReference>
<dbReference type="FunFam" id="3.30.160.60:FF:000895">
    <property type="entry name" value="Zinc finger protein 597"/>
    <property type="match status" value="1"/>
</dbReference>
<dbReference type="FunFam" id="3.30.160.60:FF:001627">
    <property type="entry name" value="Zinc finger protein 655"/>
    <property type="match status" value="1"/>
</dbReference>
<dbReference type="FunFam" id="3.30.160.60:FF:001856">
    <property type="entry name" value="Zinc finger protein 655"/>
    <property type="match status" value="1"/>
</dbReference>
<dbReference type="FunFam" id="3.30.160.60:FF:002139">
    <property type="entry name" value="Zinc finger protein 655"/>
    <property type="match status" value="1"/>
</dbReference>
<dbReference type="Gene3D" id="3.30.160.60">
    <property type="entry name" value="Classic Zinc Finger"/>
    <property type="match status" value="7"/>
</dbReference>
<dbReference type="InterPro" id="IPR036236">
    <property type="entry name" value="Znf_C2H2_sf"/>
</dbReference>
<dbReference type="InterPro" id="IPR013087">
    <property type="entry name" value="Znf_C2H2_type"/>
</dbReference>
<dbReference type="PANTHER" id="PTHR24393">
    <property type="entry name" value="ZINC FINGER PROTEIN"/>
    <property type="match status" value="1"/>
</dbReference>
<dbReference type="PANTHER" id="PTHR24393:SF100">
    <property type="entry name" value="ZINC FINGER PROTEIN-RELATED"/>
    <property type="match status" value="1"/>
</dbReference>
<dbReference type="Pfam" id="PF00096">
    <property type="entry name" value="zf-C2H2"/>
    <property type="match status" value="5"/>
</dbReference>
<dbReference type="SMART" id="SM00355">
    <property type="entry name" value="ZnF_C2H2"/>
    <property type="match status" value="8"/>
</dbReference>
<dbReference type="SUPFAM" id="SSF57667">
    <property type="entry name" value="beta-beta-alpha zinc fingers"/>
    <property type="match status" value="6"/>
</dbReference>
<dbReference type="PROSITE" id="PS00028">
    <property type="entry name" value="ZINC_FINGER_C2H2_1"/>
    <property type="match status" value="6"/>
</dbReference>
<dbReference type="PROSITE" id="PS50157">
    <property type="entry name" value="ZINC_FINGER_C2H2_2"/>
    <property type="match status" value="7"/>
</dbReference>
<evidence type="ECO:0000250" key="1">
    <source>
        <dbReference type="UniProtKB" id="Q8N720"/>
    </source>
</evidence>
<evidence type="ECO:0000255" key="2">
    <source>
        <dbReference type="PROSITE-ProRule" id="PRU00042"/>
    </source>
</evidence>
<evidence type="ECO:0000256" key="3">
    <source>
        <dbReference type="SAM" id="MobiDB-lite"/>
    </source>
</evidence>
<evidence type="ECO:0000303" key="4">
    <source ref="2"/>
</evidence>
<evidence type="ECO:0000305" key="5"/>
<evidence type="ECO:0000312" key="6">
    <source>
        <dbReference type="MGI" id="MGI:1919861"/>
    </source>
</evidence>
<reference key="1">
    <citation type="journal article" date="2005" name="Science">
        <title>The transcriptional landscape of the mammalian genome.</title>
        <authorList>
            <person name="Carninci P."/>
            <person name="Kasukawa T."/>
            <person name="Katayama S."/>
            <person name="Gough J."/>
            <person name="Frith M.C."/>
            <person name="Maeda N."/>
            <person name="Oyama R."/>
            <person name="Ravasi T."/>
            <person name="Lenhard B."/>
            <person name="Wells C."/>
            <person name="Kodzius R."/>
            <person name="Shimokawa K."/>
            <person name="Bajic V.B."/>
            <person name="Brenner S.E."/>
            <person name="Batalov S."/>
            <person name="Forrest A.R."/>
            <person name="Zavolan M."/>
            <person name="Davis M.J."/>
            <person name="Wilming L.G."/>
            <person name="Aidinis V."/>
            <person name="Allen J.E."/>
            <person name="Ambesi-Impiombato A."/>
            <person name="Apweiler R."/>
            <person name="Aturaliya R.N."/>
            <person name="Bailey T.L."/>
            <person name="Bansal M."/>
            <person name="Baxter L."/>
            <person name="Beisel K.W."/>
            <person name="Bersano T."/>
            <person name="Bono H."/>
            <person name="Chalk A.M."/>
            <person name="Chiu K.P."/>
            <person name="Choudhary V."/>
            <person name="Christoffels A."/>
            <person name="Clutterbuck D.R."/>
            <person name="Crowe M.L."/>
            <person name="Dalla E."/>
            <person name="Dalrymple B.P."/>
            <person name="de Bono B."/>
            <person name="Della Gatta G."/>
            <person name="di Bernardo D."/>
            <person name="Down T."/>
            <person name="Engstrom P."/>
            <person name="Fagiolini M."/>
            <person name="Faulkner G."/>
            <person name="Fletcher C.F."/>
            <person name="Fukushima T."/>
            <person name="Furuno M."/>
            <person name="Futaki S."/>
            <person name="Gariboldi M."/>
            <person name="Georgii-Hemming P."/>
            <person name="Gingeras T.R."/>
            <person name="Gojobori T."/>
            <person name="Green R.E."/>
            <person name="Gustincich S."/>
            <person name="Harbers M."/>
            <person name="Hayashi Y."/>
            <person name="Hensch T.K."/>
            <person name="Hirokawa N."/>
            <person name="Hill D."/>
            <person name="Huminiecki L."/>
            <person name="Iacono M."/>
            <person name="Ikeo K."/>
            <person name="Iwama A."/>
            <person name="Ishikawa T."/>
            <person name="Jakt M."/>
            <person name="Kanapin A."/>
            <person name="Katoh M."/>
            <person name="Kawasawa Y."/>
            <person name="Kelso J."/>
            <person name="Kitamura H."/>
            <person name="Kitano H."/>
            <person name="Kollias G."/>
            <person name="Krishnan S.P."/>
            <person name="Kruger A."/>
            <person name="Kummerfeld S.K."/>
            <person name="Kurochkin I.V."/>
            <person name="Lareau L.F."/>
            <person name="Lazarevic D."/>
            <person name="Lipovich L."/>
            <person name="Liu J."/>
            <person name="Liuni S."/>
            <person name="McWilliam S."/>
            <person name="Madan Babu M."/>
            <person name="Madera M."/>
            <person name="Marchionni L."/>
            <person name="Matsuda H."/>
            <person name="Matsuzawa S."/>
            <person name="Miki H."/>
            <person name="Mignone F."/>
            <person name="Miyake S."/>
            <person name="Morris K."/>
            <person name="Mottagui-Tabar S."/>
            <person name="Mulder N."/>
            <person name="Nakano N."/>
            <person name="Nakauchi H."/>
            <person name="Ng P."/>
            <person name="Nilsson R."/>
            <person name="Nishiguchi S."/>
            <person name="Nishikawa S."/>
            <person name="Nori F."/>
            <person name="Ohara O."/>
            <person name="Okazaki Y."/>
            <person name="Orlando V."/>
            <person name="Pang K.C."/>
            <person name="Pavan W.J."/>
            <person name="Pavesi G."/>
            <person name="Pesole G."/>
            <person name="Petrovsky N."/>
            <person name="Piazza S."/>
            <person name="Reed J."/>
            <person name="Reid J.F."/>
            <person name="Ring B.Z."/>
            <person name="Ringwald M."/>
            <person name="Rost B."/>
            <person name="Ruan Y."/>
            <person name="Salzberg S.L."/>
            <person name="Sandelin A."/>
            <person name="Schneider C."/>
            <person name="Schoenbach C."/>
            <person name="Sekiguchi K."/>
            <person name="Semple C.A."/>
            <person name="Seno S."/>
            <person name="Sessa L."/>
            <person name="Sheng Y."/>
            <person name="Shibata Y."/>
            <person name="Shimada H."/>
            <person name="Shimada K."/>
            <person name="Silva D."/>
            <person name="Sinclair B."/>
            <person name="Sperling S."/>
            <person name="Stupka E."/>
            <person name="Sugiura K."/>
            <person name="Sultana R."/>
            <person name="Takenaka Y."/>
            <person name="Taki K."/>
            <person name="Tammoja K."/>
            <person name="Tan S.L."/>
            <person name="Tang S."/>
            <person name="Taylor M.S."/>
            <person name="Tegner J."/>
            <person name="Teichmann S.A."/>
            <person name="Ueda H.R."/>
            <person name="van Nimwegen E."/>
            <person name="Verardo R."/>
            <person name="Wei C.L."/>
            <person name="Yagi K."/>
            <person name="Yamanishi H."/>
            <person name="Zabarovsky E."/>
            <person name="Zhu S."/>
            <person name="Zimmer A."/>
            <person name="Hide W."/>
            <person name="Bult C."/>
            <person name="Grimmond S.M."/>
            <person name="Teasdale R.D."/>
            <person name="Liu E.T."/>
            <person name="Brusic V."/>
            <person name="Quackenbush J."/>
            <person name="Wahlestedt C."/>
            <person name="Mattick J.S."/>
            <person name="Hume D.A."/>
            <person name="Kai C."/>
            <person name="Sasaki D."/>
            <person name="Tomaru Y."/>
            <person name="Fukuda S."/>
            <person name="Kanamori-Katayama M."/>
            <person name="Suzuki M."/>
            <person name="Aoki J."/>
            <person name="Arakawa T."/>
            <person name="Iida J."/>
            <person name="Imamura K."/>
            <person name="Itoh M."/>
            <person name="Kato T."/>
            <person name="Kawaji H."/>
            <person name="Kawagashira N."/>
            <person name="Kawashima T."/>
            <person name="Kojima M."/>
            <person name="Kondo S."/>
            <person name="Konno H."/>
            <person name="Nakano K."/>
            <person name="Ninomiya N."/>
            <person name="Nishio T."/>
            <person name="Okada M."/>
            <person name="Plessy C."/>
            <person name="Shibata K."/>
            <person name="Shiraki T."/>
            <person name="Suzuki S."/>
            <person name="Tagami M."/>
            <person name="Waki K."/>
            <person name="Watahiki A."/>
            <person name="Okamura-Oho Y."/>
            <person name="Suzuki H."/>
            <person name="Kawai J."/>
            <person name="Hayashizaki Y."/>
        </authorList>
    </citation>
    <scope>NUCLEOTIDE SEQUENCE [LARGE SCALE MRNA] (ISOFORMS 1 AND 2)</scope>
    <source>
        <strain>C57BL/6J</strain>
        <tissue>Olfactory bulb</tissue>
    </source>
</reference>
<reference key="2">
    <citation type="submission" date="2005-02" db="EMBL/GenBank/DDBJ databases">
        <title>Prediction of the Coding Sequences of Mouse Homologues of KIAA Gene. The Complete Nucleotide Sequences of Mouse KIAA-homologous cDNAs Identified by Screening of Terminal sequences of cDNA Clones Randomly Sampled from Size-Fractionated Libraries.</title>
        <authorList>
            <person name="Okazaki N."/>
            <person name="Kikuno R.F."/>
            <person name="Ohara R."/>
            <person name="Inamoto S."/>
            <person name="Nagase T."/>
            <person name="Ohara O."/>
            <person name="Koga H."/>
        </authorList>
    </citation>
    <scope>NUCLEOTIDE SEQUENCE [LARGE SCALE MRNA] (ISOFORM 1)</scope>
    <source>
        <tissue>Kidney</tissue>
    </source>
</reference>
<reference key="3">
    <citation type="journal article" date="2009" name="PLoS Biol.">
        <title>Lineage-specific biology revealed by a finished genome assembly of the mouse.</title>
        <authorList>
            <person name="Church D.M."/>
            <person name="Goodstadt L."/>
            <person name="Hillier L.W."/>
            <person name="Zody M.C."/>
            <person name="Goldstein S."/>
            <person name="She X."/>
            <person name="Bult C.J."/>
            <person name="Agarwala R."/>
            <person name="Cherry J.L."/>
            <person name="DiCuccio M."/>
            <person name="Hlavina W."/>
            <person name="Kapustin Y."/>
            <person name="Meric P."/>
            <person name="Maglott D."/>
            <person name="Birtle Z."/>
            <person name="Marques A.C."/>
            <person name="Graves T."/>
            <person name="Zhou S."/>
            <person name="Teague B."/>
            <person name="Potamousis K."/>
            <person name="Churas C."/>
            <person name="Place M."/>
            <person name="Herschleb J."/>
            <person name="Runnheim R."/>
            <person name="Forrest D."/>
            <person name="Amos-Landgraf J."/>
            <person name="Schwartz D.C."/>
            <person name="Cheng Z."/>
            <person name="Lindblad-Toh K."/>
            <person name="Eichler E.E."/>
            <person name="Ponting C.P."/>
        </authorList>
    </citation>
    <scope>NUCLEOTIDE SEQUENCE [LARGE SCALE GENOMIC DNA]</scope>
    <source>
        <strain>C57BL/6J</strain>
    </source>
</reference>
<reference key="4">
    <citation type="journal article" date="2004" name="Genome Res.">
        <title>The status, quality, and expansion of the NIH full-length cDNA project: the Mammalian Gene Collection (MGC).</title>
        <authorList>
            <consortium name="The MGC Project Team"/>
        </authorList>
    </citation>
    <scope>NUCLEOTIDE SEQUENCE [LARGE SCALE MRNA] (ISOFORMS 1 AND 2)</scope>
    <source>
        <strain>C57BL/6J</strain>
        <tissue>Brain</tissue>
        <tissue>Heart</tissue>
        <tissue>Lung</tissue>
    </source>
</reference>
<reference key="5">
    <citation type="journal article" date="2010" name="Cell">
        <title>A tissue-specific atlas of mouse protein phosphorylation and expression.</title>
        <authorList>
            <person name="Huttlin E.L."/>
            <person name="Jedrychowski M.P."/>
            <person name="Elias J.E."/>
            <person name="Goswami T."/>
            <person name="Rad R."/>
            <person name="Beausoleil S.A."/>
            <person name="Villen J."/>
            <person name="Haas W."/>
            <person name="Sowa M.E."/>
            <person name="Gygi S.P."/>
        </authorList>
    </citation>
    <scope>IDENTIFICATION BY MASS SPECTROMETRY [LARGE SCALE ANALYSIS]</scope>
</reference>
<name>ZN655_MOUSE</name>
<keyword id="KW-0025">Alternative splicing</keyword>
<keyword id="KW-0479">Metal-binding</keyword>
<keyword id="KW-0539">Nucleus</keyword>
<keyword id="KW-1185">Reference proteome</keyword>
<keyword id="KW-0677">Repeat</keyword>
<keyword id="KW-0862">Zinc</keyword>
<keyword id="KW-0863">Zinc-finger</keyword>
<accession>Q9CZP3</accession>
<accession>A0A0G2JE56</accession>
<accession>A0A0G2JEF7</accession>
<accession>A0A0G2JEM1</accession>
<accession>Q5DTG8</accession>
<accession>Q6P8W7</accession>
<accession>Q6P9P9</accession>
<sequence>MEEVTSQEAAESPRGHFQPLENQSECLSPELRFLQDTDMEQGFSGGFPISKPDGISEREQDLQVFDLESKNREVIRGDCSDGETREENKLLIPKRKISEEVHSYKVRVGKFKQDIAQVPETREVYKSEDRLERLQEILRKFLFLEREFRQITISKKTFSSEKNTEPEKSFSLDSTLDTDQRVLRIQTTDDSKYDMNFNQNPAVGEQEPINLTENFQSTDYKESLMDLSHLNKWESMPTTDRSYKCDTCGKTFHQASALTRHQRIHTREKPYKCKECEKSFSQSSSLSRHKRIHTREKSYKCEASDKSCDAPDKSCSQSSDVLQHKKGHAKAKSYKCGTCERVFSRSVHLTQHQRTHKDMSCKCTVCGSDFCHTSYLVEHQRLHHQEKSYEYDECGLAYVKQQGIRFQEKPYSCNECGKDFRLNSHLIQHQRIHTGEKLHECNECGKSFSQTSCLIQHHKMHRKEKSYEYNNYEESFSHSSDLTLQQEVPIRERVFDCDAWEENFSQRAHLIQHERVHTKEKPYECSELGETFSQVQASFNM</sequence>
<comment type="function">
    <text evidence="5">Probable transcription factor.</text>
</comment>
<comment type="subunit">
    <text evidence="1">Interacts with VAV1 and CDK4. Interacts with INTS13; promoting association with the integrator complex.</text>
</comment>
<comment type="subcellular location">
    <subcellularLocation>
        <location evidence="5">Nucleus</location>
    </subcellularLocation>
</comment>
<comment type="alternative products">
    <event type="alternative splicing"/>
    <isoform>
        <id>Q9CZP3-1</id>
        <name>1</name>
        <sequence type="displayed"/>
    </isoform>
    <isoform>
        <id>Q9CZP3-2</id>
        <name>2</name>
        <sequence type="described" ref="VSP_062538 VSP_062539"/>
    </isoform>
</comment>
<comment type="similarity">
    <text evidence="5">Belongs to the krueppel C2H2-type zinc-finger protein family.</text>
</comment>
<comment type="sequence caution" evidence="5">
    <conflict type="erroneous initiation">
        <sequence resource="EMBL-CDS" id="BAD90322"/>
    </conflict>
    <text>Extended N-terminus.</text>
</comment>